<feature type="chain" id="PRO_0000170128" description="4-alpha-glucanotransferase">
    <location>
        <begin position="1"/>
        <end position="724"/>
    </location>
</feature>
<organism>
    <name type="scientific">Mycobacterium bovis (strain ATCC BAA-935 / AF2122/97)</name>
    <dbReference type="NCBI Taxonomy" id="233413"/>
    <lineage>
        <taxon>Bacteria</taxon>
        <taxon>Bacillati</taxon>
        <taxon>Actinomycetota</taxon>
        <taxon>Actinomycetes</taxon>
        <taxon>Mycobacteriales</taxon>
        <taxon>Mycobacteriaceae</taxon>
        <taxon>Mycobacterium</taxon>
        <taxon>Mycobacterium tuberculosis complex</taxon>
    </lineage>
</organism>
<evidence type="ECO:0000250" key="1"/>
<evidence type="ECO:0000305" key="2"/>
<accession>P65337</accession>
<accession>A0A1R3Y047</accession>
<accession>O53932</accession>
<accession>X2BIU5</accession>
<proteinExistence type="inferred from homology"/>
<reference key="1">
    <citation type="journal article" date="2003" name="Proc. Natl. Acad. Sci. U.S.A.">
        <title>The complete genome sequence of Mycobacterium bovis.</title>
        <authorList>
            <person name="Garnier T."/>
            <person name="Eiglmeier K."/>
            <person name="Camus J.-C."/>
            <person name="Medina N."/>
            <person name="Mansoor H."/>
            <person name="Pryor M."/>
            <person name="Duthoy S."/>
            <person name="Grondin S."/>
            <person name="Lacroix C."/>
            <person name="Monsempe C."/>
            <person name="Simon S."/>
            <person name="Harris B."/>
            <person name="Atkin R."/>
            <person name="Doggett J."/>
            <person name="Mayes R."/>
            <person name="Keating L."/>
            <person name="Wheeler P.R."/>
            <person name="Parkhill J."/>
            <person name="Barrell B.G."/>
            <person name="Cole S.T."/>
            <person name="Gordon S.V."/>
            <person name="Hewinson R.G."/>
        </authorList>
    </citation>
    <scope>NUCLEOTIDE SEQUENCE [LARGE SCALE GENOMIC DNA]</scope>
    <source>
        <strain>ATCC BAA-935 / AF2122/97</strain>
    </source>
</reference>
<reference key="2">
    <citation type="journal article" date="2017" name="Genome Announc.">
        <title>Updated reference genome sequence and annotation of Mycobacterium bovis AF2122/97.</title>
        <authorList>
            <person name="Malone K.M."/>
            <person name="Farrell D."/>
            <person name="Stuber T.P."/>
            <person name="Schubert O.T."/>
            <person name="Aebersold R."/>
            <person name="Robbe-Austerman S."/>
            <person name="Gordon S.V."/>
        </authorList>
    </citation>
    <scope>NUCLEOTIDE SEQUENCE [LARGE SCALE GENOMIC DNA]</scope>
    <scope>GENOME REANNOTATION</scope>
    <source>
        <strain>ATCC BAA-935 / AF2122/97</strain>
    </source>
</reference>
<comment type="catalytic activity">
    <reaction>
        <text>Transfers a segment of a (1-&gt;4)-alpha-D-glucan to a new position in an acceptor, which may be glucose or a (1-&gt;4)-alpha-D-glucan.</text>
        <dbReference type="EC" id="2.4.1.25"/>
    </reaction>
</comment>
<comment type="subcellular location">
    <subcellularLocation>
        <location evidence="1">Cytoplasm</location>
    </subcellularLocation>
</comment>
<comment type="similarity">
    <text evidence="2">Belongs to the disproportionating enzyme family.</text>
</comment>
<gene>
    <name type="primary">malQ</name>
    <name type="ordered locus">BQ2027_MB1810C</name>
</gene>
<sequence>MTELAPSLVELARRFGIATEYTDWTGRQVLVSEATLVAALAALGVPAQTEQQRNDALAAQLRSYWARPLPATIVMRAGEQTQFRVHVTDGAPADVWLQLEDGTTRAEVVQVDNFTPPFDLDGRWIGEASFVLPADLPLGYHRVNLRSGDSQASAAVVVTPDWLGLPDKLAGRRAWGLAVQLYSVRSRQSWGIGDLTDLANLALWSASAHGAGYVLVNPLHAATLPGPAGRSKPIEPSPYLPTSRRFVNPLYLRVEAIPELVDLPKRGRVQRLRTNVQQHADQLDTIDRDSAWAAKRAALKLVHRVPRSAGRELAYAAFRTREGRALDDFATWCALAETYGDDWHRWPKSLRHPDASGVADFVDKHADAVDFHRWLQWQLDEQLASAQSQALRAGMSLGIMADLAVGVHPNGADAWALQDVLAQGVTAGAPPDEFNQLGQDWSQPPWRPDRLAEQEYRPFRALIQAALRHAGAVRIDHIIGLFRLWWIPDGAPPTQGTYVRYDHDAMIGIVALEAHRAGAVVVGEDLGTVEPWVRDYLLLRGLLGTSILWFEQDRDCGPAGTPLPAERWREYCLSSVTTHDLPPTAGYLAGDQVRLRESLGLLTNPVEAELESARADRAAWMAELRRVGLLADGAEPDSEEAVLALYRYLGRTPSRLLAVALTDAVGDRRTQNQPGTTDEYPNWRVPLTGPDGQPMLLEDIFTDRRAATLAEAVRAATTSPMSCW</sequence>
<dbReference type="EC" id="2.4.1.25"/>
<dbReference type="EMBL" id="LT708304">
    <property type="protein sequence ID" value="SIU00414.1"/>
    <property type="molecule type" value="Genomic_DNA"/>
</dbReference>
<dbReference type="RefSeq" id="NP_855463.1">
    <property type="nucleotide sequence ID" value="NC_002945.3"/>
</dbReference>
<dbReference type="RefSeq" id="WP_003408795.1">
    <property type="nucleotide sequence ID" value="NC_002945.4"/>
</dbReference>
<dbReference type="SMR" id="P65337"/>
<dbReference type="GeneID" id="45425759"/>
<dbReference type="KEGG" id="mbo:BQ2027_MB1810C"/>
<dbReference type="PATRIC" id="fig|233413.5.peg.1989"/>
<dbReference type="Proteomes" id="UP000001419">
    <property type="component" value="Chromosome"/>
</dbReference>
<dbReference type="GO" id="GO:0005737">
    <property type="term" value="C:cytoplasm"/>
    <property type="evidence" value="ECO:0007669"/>
    <property type="project" value="UniProtKB-SubCell"/>
</dbReference>
<dbReference type="GO" id="GO:0004134">
    <property type="term" value="F:4-alpha-glucanotransferase activity"/>
    <property type="evidence" value="ECO:0007669"/>
    <property type="project" value="UniProtKB-EC"/>
</dbReference>
<dbReference type="GO" id="GO:0005975">
    <property type="term" value="P:carbohydrate metabolic process"/>
    <property type="evidence" value="ECO:0007669"/>
    <property type="project" value="InterPro"/>
</dbReference>
<dbReference type="FunFam" id="3.20.20.80:FF:000082">
    <property type="entry name" value="4-alpha-glucanotransferase"/>
    <property type="match status" value="1"/>
</dbReference>
<dbReference type="Gene3D" id="3.20.20.80">
    <property type="entry name" value="Glycosidases"/>
    <property type="match status" value="1"/>
</dbReference>
<dbReference type="InterPro" id="IPR003385">
    <property type="entry name" value="Glyco_hydro_77"/>
</dbReference>
<dbReference type="InterPro" id="IPR017853">
    <property type="entry name" value="Glycoside_hydrolase_SF"/>
</dbReference>
<dbReference type="InterPro" id="IPR048458">
    <property type="entry name" value="MalQ_N"/>
</dbReference>
<dbReference type="NCBIfam" id="TIGR00217">
    <property type="entry name" value="malQ"/>
    <property type="match status" value="1"/>
</dbReference>
<dbReference type="PANTHER" id="PTHR32438">
    <property type="entry name" value="4-ALPHA-GLUCANOTRANSFERASE DPE1, CHLOROPLASTIC/AMYLOPLASTIC"/>
    <property type="match status" value="1"/>
</dbReference>
<dbReference type="PANTHER" id="PTHR32438:SF5">
    <property type="entry name" value="4-ALPHA-GLUCANOTRANSFERASE DPE1, CHLOROPLASTIC_AMYLOPLASTIC"/>
    <property type="match status" value="1"/>
</dbReference>
<dbReference type="Pfam" id="PF02446">
    <property type="entry name" value="Glyco_hydro_77"/>
    <property type="match status" value="1"/>
</dbReference>
<dbReference type="Pfam" id="PF21226">
    <property type="entry name" value="MalQ_N"/>
    <property type="match status" value="1"/>
</dbReference>
<dbReference type="SUPFAM" id="SSF51445">
    <property type="entry name" value="(Trans)glycosidases"/>
    <property type="match status" value="1"/>
</dbReference>
<protein>
    <recommendedName>
        <fullName>4-alpha-glucanotransferase</fullName>
        <ecNumber>2.4.1.25</ecNumber>
    </recommendedName>
    <alternativeName>
        <fullName>Amylomaltase</fullName>
    </alternativeName>
    <alternativeName>
        <fullName>Disproportionating enzyme</fullName>
        <shortName>D-enzyme</shortName>
    </alternativeName>
</protein>
<name>MALQ_MYCBO</name>
<keyword id="KW-0119">Carbohydrate metabolism</keyword>
<keyword id="KW-0963">Cytoplasm</keyword>
<keyword id="KW-0328">Glycosyltransferase</keyword>
<keyword id="KW-1185">Reference proteome</keyword>
<keyword id="KW-0808">Transferase</keyword>